<gene>
    <name type="primary">fabp1</name>
</gene>
<dbReference type="SMR" id="P0C241"/>
<dbReference type="iPTMnet" id="P0C241"/>
<dbReference type="GO" id="GO:0005737">
    <property type="term" value="C:cytoplasm"/>
    <property type="evidence" value="ECO:0007669"/>
    <property type="project" value="UniProtKB-SubCell"/>
</dbReference>
<dbReference type="GO" id="GO:0008289">
    <property type="term" value="F:lipid binding"/>
    <property type="evidence" value="ECO:0007669"/>
    <property type="project" value="UniProtKB-KW"/>
</dbReference>
<dbReference type="GO" id="GO:0006869">
    <property type="term" value="P:lipid transport"/>
    <property type="evidence" value="ECO:0007669"/>
    <property type="project" value="UniProtKB-KW"/>
</dbReference>
<dbReference type="Gene3D" id="2.40.128.20">
    <property type="match status" value="1"/>
</dbReference>
<dbReference type="InterPro" id="IPR012674">
    <property type="entry name" value="Calycin"/>
</dbReference>
<dbReference type="InterPro" id="IPR000463">
    <property type="entry name" value="Fatty_acid-bd"/>
</dbReference>
<dbReference type="InterPro" id="IPR031259">
    <property type="entry name" value="ILBP"/>
</dbReference>
<dbReference type="PANTHER" id="PTHR11955">
    <property type="entry name" value="FATTY ACID BINDING PROTEIN"/>
    <property type="match status" value="1"/>
</dbReference>
<dbReference type="Pfam" id="PF14651">
    <property type="entry name" value="Lipocalin_7"/>
    <property type="match status" value="1"/>
</dbReference>
<dbReference type="PRINTS" id="PR00178">
    <property type="entry name" value="FATTYACIDBP"/>
</dbReference>
<dbReference type="SUPFAM" id="SSF50814">
    <property type="entry name" value="Lipocalins"/>
    <property type="match status" value="1"/>
</dbReference>
<dbReference type="PROSITE" id="PS00214">
    <property type="entry name" value="FABP"/>
    <property type="match status" value="1"/>
</dbReference>
<comment type="function">
    <text evidence="1">Binds free fatty acids and their coenzyme A derivatives, bilirubin, and some other small molecules in the cytoplasm. May be involved in intracellular lipid transport (By similarity).</text>
</comment>
<comment type="subcellular location">
    <subcellularLocation>
        <location evidence="1">Cytoplasm</location>
    </subcellularLocation>
</comment>
<comment type="domain">
    <text evidence="1">Forms a beta-barrel structure that accommodates hydrophobic ligands in its interior.</text>
</comment>
<comment type="similarity">
    <text evidence="3">Belongs to the calycin superfamily. Fatty-acid binding protein (FABP) family.</text>
</comment>
<feature type="initiator methionine" description="Removed" evidence="2">
    <location>
        <position position="1"/>
    </location>
</feature>
<feature type="chain" id="PRO_0000260300" description="Fatty acid-binding protein, liver">
    <location>
        <begin position="2"/>
        <end position="126"/>
    </location>
</feature>
<feature type="binding site" evidence="1">
    <location>
        <position position="77"/>
    </location>
    <ligand>
        <name>cholate</name>
        <dbReference type="ChEBI" id="CHEBI:29747"/>
    </ligand>
</feature>
<feature type="binding site" evidence="1">
    <location>
        <position position="99"/>
    </location>
    <ligand>
        <name>cholate</name>
        <dbReference type="ChEBI" id="CHEBI:29747"/>
    </ligand>
</feature>
<feature type="binding site" evidence="1">
    <location>
        <position position="101"/>
    </location>
    <ligand>
        <name>cholate</name>
        <dbReference type="ChEBI" id="CHEBI:29747"/>
    </ligand>
</feature>
<feature type="modified residue" description="N-acetylalanine" evidence="2">
    <location>
        <position position="2"/>
    </location>
</feature>
<feature type="sequence variant" description="In isoform II." evidence="2">
    <original>P</original>
    <variation>S</variation>
    <location>
        <position position="17"/>
    </location>
</feature>
<reference key="1">
    <citation type="journal article" date="1999" name="J. Biochem.">
        <title>Characterization and primary structure of a fatty acid-binding protein and its isoforms from the liver of the Amphibia, Rana catesbeiana.</title>
        <authorList>
            <person name="Baba K."/>
            <person name="Abe T.K."/>
            <person name="Tsunasawa S."/>
            <person name="Odani S."/>
        </authorList>
    </citation>
    <scope>PROTEIN SEQUENCE OF 2-126</scope>
    <scope>ACETYLATION AT ALA-2</scope>
    <scope>VARIANT SER-17</scope>
    <source>
        <tissue>Liver</tissue>
    </source>
</reference>
<organism>
    <name type="scientific">Aquarana catesbeiana</name>
    <name type="common">American bullfrog</name>
    <name type="synonym">Rana catesbeiana</name>
    <dbReference type="NCBI Taxonomy" id="8400"/>
    <lineage>
        <taxon>Eukaryota</taxon>
        <taxon>Metazoa</taxon>
        <taxon>Chordata</taxon>
        <taxon>Craniata</taxon>
        <taxon>Vertebrata</taxon>
        <taxon>Euteleostomi</taxon>
        <taxon>Amphibia</taxon>
        <taxon>Batrachia</taxon>
        <taxon>Anura</taxon>
        <taxon>Neobatrachia</taxon>
        <taxon>Ranoidea</taxon>
        <taxon>Ranidae</taxon>
        <taxon>Aquarana</taxon>
    </lineage>
</organism>
<name>FABPL_AQUCT</name>
<protein>
    <recommendedName>
        <fullName>Fatty acid-binding protein, liver</fullName>
    </recommendedName>
    <alternativeName>
        <fullName>Fatty acid-binding protein 1</fullName>
    </alternativeName>
    <alternativeName>
        <fullName>Liver-type fatty acid-binding protein</fullName>
        <shortName>L-FABP</shortName>
    </alternativeName>
</protein>
<evidence type="ECO:0000250" key="1"/>
<evidence type="ECO:0000269" key="2">
    <source>
    </source>
</evidence>
<evidence type="ECO:0000305" key="3"/>
<proteinExistence type="evidence at protein level"/>
<sequence length="126" mass="13853">MAFSGIWNVYSQENYEPFLKAVGVPDDIIKVAKDIKPVIEIQQNGNDFVVTLKTPKNSQSNSFTVGQEAEITSAGGKKFKVTVNLEGGKLICKSDTFSHIQEVNGDEMVEQITIGSTTLIRKSKRS</sequence>
<accession>P0C241</accession>
<keyword id="KW-0007">Acetylation</keyword>
<keyword id="KW-0963">Cytoplasm</keyword>
<keyword id="KW-0903">Direct protein sequencing</keyword>
<keyword id="KW-0445">Lipid transport</keyword>
<keyword id="KW-0446">Lipid-binding</keyword>
<keyword id="KW-0813">Transport</keyword>